<organism>
    <name type="scientific">Wolbachia pipientis wMel</name>
    <dbReference type="NCBI Taxonomy" id="163164"/>
    <lineage>
        <taxon>Bacteria</taxon>
        <taxon>Pseudomonadati</taxon>
        <taxon>Pseudomonadota</taxon>
        <taxon>Alphaproteobacteria</taxon>
        <taxon>Rickettsiales</taxon>
        <taxon>Anaplasmataceae</taxon>
        <taxon>Wolbachieae</taxon>
        <taxon>Wolbachia</taxon>
    </lineage>
</organism>
<keyword id="KW-0285">Flavoprotein</keyword>
<keyword id="KW-0288">FMN</keyword>
<keyword id="KW-0560">Oxidoreductase</keyword>
<keyword id="KW-0664">Pyridoxine biosynthesis</keyword>
<proteinExistence type="inferred from homology"/>
<comment type="function">
    <text evidence="1">Catalyzes the oxidation of either pyridoxine 5'-phosphate (PNP) or pyridoxamine 5'-phosphate (PMP) into pyridoxal 5'-phosphate (PLP).</text>
</comment>
<comment type="catalytic activity">
    <reaction evidence="1">
        <text>pyridoxamine 5'-phosphate + O2 + H2O = pyridoxal 5'-phosphate + H2O2 + NH4(+)</text>
        <dbReference type="Rhea" id="RHEA:15817"/>
        <dbReference type="ChEBI" id="CHEBI:15377"/>
        <dbReference type="ChEBI" id="CHEBI:15379"/>
        <dbReference type="ChEBI" id="CHEBI:16240"/>
        <dbReference type="ChEBI" id="CHEBI:28938"/>
        <dbReference type="ChEBI" id="CHEBI:58451"/>
        <dbReference type="ChEBI" id="CHEBI:597326"/>
        <dbReference type="EC" id="1.4.3.5"/>
    </reaction>
</comment>
<comment type="catalytic activity">
    <reaction evidence="1">
        <text>pyridoxine 5'-phosphate + O2 = pyridoxal 5'-phosphate + H2O2</text>
        <dbReference type="Rhea" id="RHEA:15149"/>
        <dbReference type="ChEBI" id="CHEBI:15379"/>
        <dbReference type="ChEBI" id="CHEBI:16240"/>
        <dbReference type="ChEBI" id="CHEBI:58589"/>
        <dbReference type="ChEBI" id="CHEBI:597326"/>
        <dbReference type="EC" id="1.4.3.5"/>
    </reaction>
</comment>
<comment type="cofactor">
    <cofactor evidence="1">
        <name>FMN</name>
        <dbReference type="ChEBI" id="CHEBI:58210"/>
    </cofactor>
    <text evidence="1">Binds 1 FMN per subunit.</text>
</comment>
<comment type="pathway">
    <text evidence="1">Cofactor metabolism; pyridoxal 5'-phosphate salvage; pyridoxal 5'-phosphate from pyridoxamine 5'-phosphate: step 1/1.</text>
</comment>
<comment type="pathway">
    <text evidence="1">Cofactor metabolism; pyridoxal 5'-phosphate salvage; pyridoxal 5'-phosphate from pyridoxine 5'-phosphate: step 1/1.</text>
</comment>
<comment type="subunit">
    <text evidence="1">Homodimer.</text>
</comment>
<comment type="similarity">
    <text evidence="1">Belongs to the pyridoxamine 5'-phosphate oxidase family.</text>
</comment>
<feature type="chain" id="PRO_0000167771" description="Pyridoxine/pyridoxamine 5'-phosphate oxidase">
    <location>
        <begin position="1"/>
        <end position="216"/>
    </location>
</feature>
<feature type="binding site" evidence="1">
    <location>
        <begin position="64"/>
        <end position="69"/>
    </location>
    <ligand>
        <name>FMN</name>
        <dbReference type="ChEBI" id="CHEBI:58210"/>
    </ligand>
</feature>
<feature type="binding site" evidence="1">
    <location>
        <position position="69"/>
    </location>
    <ligand>
        <name>substrate</name>
    </ligand>
</feature>
<feature type="binding site" evidence="1">
    <location>
        <begin position="79"/>
        <end position="80"/>
    </location>
    <ligand>
        <name>FMN</name>
        <dbReference type="ChEBI" id="CHEBI:58210"/>
    </ligand>
</feature>
<feature type="binding site" evidence="1">
    <location>
        <position position="85"/>
    </location>
    <ligand>
        <name>FMN</name>
        <dbReference type="ChEBI" id="CHEBI:58210"/>
    </ligand>
</feature>
<feature type="binding site" evidence="1">
    <location>
        <position position="86"/>
    </location>
    <ligand>
        <name>FMN</name>
        <dbReference type="ChEBI" id="CHEBI:58210"/>
    </ligand>
</feature>
<feature type="binding site" evidence="1">
    <location>
        <position position="108"/>
    </location>
    <ligand>
        <name>FMN</name>
        <dbReference type="ChEBI" id="CHEBI:58210"/>
    </ligand>
</feature>
<feature type="binding site" evidence="1">
    <location>
        <position position="126"/>
    </location>
    <ligand>
        <name>substrate</name>
    </ligand>
</feature>
<feature type="binding site" evidence="1">
    <location>
        <position position="130"/>
    </location>
    <ligand>
        <name>substrate</name>
    </ligand>
</feature>
<feature type="binding site" evidence="1">
    <location>
        <position position="134"/>
    </location>
    <ligand>
        <name>substrate</name>
    </ligand>
</feature>
<feature type="binding site" evidence="1">
    <location>
        <begin position="143"/>
        <end position="144"/>
    </location>
    <ligand>
        <name>FMN</name>
        <dbReference type="ChEBI" id="CHEBI:58210"/>
    </ligand>
</feature>
<feature type="binding site" evidence="1">
    <location>
        <position position="188"/>
    </location>
    <ligand>
        <name>FMN</name>
        <dbReference type="ChEBI" id="CHEBI:58210"/>
    </ligand>
</feature>
<feature type="binding site" evidence="1">
    <location>
        <begin position="194"/>
        <end position="196"/>
    </location>
    <ligand>
        <name>substrate</name>
    </ligand>
</feature>
<feature type="binding site" evidence="1">
    <location>
        <position position="198"/>
    </location>
    <ligand>
        <name>FMN</name>
        <dbReference type="ChEBI" id="CHEBI:58210"/>
    </ligand>
</feature>
<evidence type="ECO:0000255" key="1">
    <source>
        <dbReference type="HAMAP-Rule" id="MF_01629"/>
    </source>
</evidence>
<dbReference type="EC" id="1.4.3.5" evidence="1"/>
<dbReference type="EMBL" id="AE017196">
    <property type="protein sequence ID" value="AAS14809.1"/>
    <property type="molecule type" value="Genomic_DNA"/>
</dbReference>
<dbReference type="SMR" id="Q73G09"/>
<dbReference type="EnsemblBacteria" id="AAS14809">
    <property type="protein sequence ID" value="AAS14809"/>
    <property type="gene ID" value="WD_1159"/>
</dbReference>
<dbReference type="KEGG" id="wol:WD_1159"/>
<dbReference type="eggNOG" id="COG0259">
    <property type="taxonomic scope" value="Bacteria"/>
</dbReference>
<dbReference type="UniPathway" id="UPA01068">
    <property type="reaction ID" value="UER00304"/>
</dbReference>
<dbReference type="UniPathway" id="UPA01068">
    <property type="reaction ID" value="UER00305"/>
</dbReference>
<dbReference type="Proteomes" id="UP000008215">
    <property type="component" value="Chromosome"/>
</dbReference>
<dbReference type="GO" id="GO:0010181">
    <property type="term" value="F:FMN binding"/>
    <property type="evidence" value="ECO:0007669"/>
    <property type="project" value="UniProtKB-UniRule"/>
</dbReference>
<dbReference type="GO" id="GO:0004733">
    <property type="term" value="F:pyridoxamine phosphate oxidase activity"/>
    <property type="evidence" value="ECO:0007669"/>
    <property type="project" value="UniProtKB-UniRule"/>
</dbReference>
<dbReference type="GO" id="GO:0008615">
    <property type="term" value="P:pyridoxine biosynthetic process"/>
    <property type="evidence" value="ECO:0007669"/>
    <property type="project" value="UniProtKB-KW"/>
</dbReference>
<dbReference type="Gene3D" id="2.30.110.10">
    <property type="entry name" value="Electron Transport, Fmn-binding Protein, Chain A"/>
    <property type="match status" value="1"/>
</dbReference>
<dbReference type="HAMAP" id="MF_01629">
    <property type="entry name" value="PdxH"/>
    <property type="match status" value="1"/>
</dbReference>
<dbReference type="InterPro" id="IPR000659">
    <property type="entry name" value="Pyridox_Oxase"/>
</dbReference>
<dbReference type="InterPro" id="IPR019740">
    <property type="entry name" value="Pyridox_Oxase_CS"/>
</dbReference>
<dbReference type="InterPro" id="IPR011576">
    <property type="entry name" value="Pyridox_Oxase_N"/>
</dbReference>
<dbReference type="InterPro" id="IPR019576">
    <property type="entry name" value="Pyridoxamine_oxidase_dimer_C"/>
</dbReference>
<dbReference type="InterPro" id="IPR012349">
    <property type="entry name" value="Split_barrel_FMN-bd"/>
</dbReference>
<dbReference type="NCBIfam" id="TIGR00558">
    <property type="entry name" value="pdxH"/>
    <property type="match status" value="1"/>
</dbReference>
<dbReference type="NCBIfam" id="NF004231">
    <property type="entry name" value="PRK05679.1"/>
    <property type="match status" value="1"/>
</dbReference>
<dbReference type="PANTHER" id="PTHR10851:SF0">
    <property type="entry name" value="PYRIDOXINE-5'-PHOSPHATE OXIDASE"/>
    <property type="match status" value="1"/>
</dbReference>
<dbReference type="PANTHER" id="PTHR10851">
    <property type="entry name" value="PYRIDOXINE-5-PHOSPHATE OXIDASE"/>
    <property type="match status" value="1"/>
</dbReference>
<dbReference type="Pfam" id="PF10590">
    <property type="entry name" value="PNP_phzG_C"/>
    <property type="match status" value="1"/>
</dbReference>
<dbReference type="Pfam" id="PF01243">
    <property type="entry name" value="PNPOx_N"/>
    <property type="match status" value="1"/>
</dbReference>
<dbReference type="PIRSF" id="PIRSF000190">
    <property type="entry name" value="Pyd_amn-ph_oxd"/>
    <property type="match status" value="1"/>
</dbReference>
<dbReference type="SUPFAM" id="SSF50475">
    <property type="entry name" value="FMN-binding split barrel"/>
    <property type="match status" value="1"/>
</dbReference>
<dbReference type="PROSITE" id="PS01064">
    <property type="entry name" value="PYRIDOX_OXIDASE"/>
    <property type="match status" value="1"/>
</dbReference>
<accession>Q73G09</accession>
<name>PDXH_WOLPM</name>
<protein>
    <recommendedName>
        <fullName evidence="1">Pyridoxine/pyridoxamine 5'-phosphate oxidase</fullName>
        <ecNumber evidence="1">1.4.3.5</ecNumber>
    </recommendedName>
    <alternativeName>
        <fullName evidence="1">PNP/PMP oxidase</fullName>
        <shortName evidence="1">PNPOx</shortName>
    </alternativeName>
    <alternativeName>
        <fullName evidence="1">Pyridoxal 5'-phosphate synthase</fullName>
    </alternativeName>
</protein>
<sequence>MAVALIFATRARIKILFFDMIFSLEKDPFDLFSKWYKAVLNSPCEQPTAMTLATCSKDCIPSARVVLLKEYSKEGFVFFTNVNSKKGKELTENPKAALVFHWIEFARQVRIEGEVKLLNDERTDKYFSSRALGSQISAWCSKQSSILKDWQDFEQAIKLKEKEFHNTQVSRPDFWVGFCVIPKVIEFWQEGEYRKHIRFRYTLVEGSDWKVEQLYP</sequence>
<reference key="1">
    <citation type="journal article" date="2004" name="PLoS Biol.">
        <title>Phylogenomics of the reproductive parasite Wolbachia pipientis wMel: a streamlined genome overrun by mobile genetic elements.</title>
        <authorList>
            <person name="Wu M."/>
            <person name="Sun L.V."/>
            <person name="Vamathevan J.J."/>
            <person name="Riegler M."/>
            <person name="DeBoy R.T."/>
            <person name="Brownlie J.C."/>
            <person name="McGraw E.A."/>
            <person name="Martin W."/>
            <person name="Esser C."/>
            <person name="Ahmadinejad N."/>
            <person name="Wiegand C."/>
            <person name="Madupu R."/>
            <person name="Beanan M.J."/>
            <person name="Brinkac L.M."/>
            <person name="Daugherty S.C."/>
            <person name="Durkin A.S."/>
            <person name="Kolonay J.F."/>
            <person name="Nelson W.C."/>
            <person name="Mohamoud Y."/>
            <person name="Lee P."/>
            <person name="Berry K.J."/>
            <person name="Young M.B."/>
            <person name="Utterback T.R."/>
            <person name="Weidman J.F."/>
            <person name="Nierman W.C."/>
            <person name="Paulsen I.T."/>
            <person name="Nelson K.E."/>
            <person name="Tettelin H."/>
            <person name="O'Neill S.L."/>
            <person name="Eisen J.A."/>
        </authorList>
    </citation>
    <scope>NUCLEOTIDE SEQUENCE [LARGE SCALE GENOMIC DNA]</scope>
</reference>
<gene>
    <name evidence="1" type="primary">pdxH</name>
    <name type="ordered locus">WD_1159</name>
</gene>